<organism>
    <name type="scientific">Bordetella bronchiseptica (strain ATCC BAA-588 / NCTC 13252 / RB50)</name>
    <name type="common">Alcaligenes bronchisepticus</name>
    <dbReference type="NCBI Taxonomy" id="257310"/>
    <lineage>
        <taxon>Bacteria</taxon>
        <taxon>Pseudomonadati</taxon>
        <taxon>Pseudomonadota</taxon>
        <taxon>Betaproteobacteria</taxon>
        <taxon>Burkholderiales</taxon>
        <taxon>Alcaligenaceae</taxon>
        <taxon>Bordetella</taxon>
    </lineage>
</organism>
<comment type="function">
    <text evidence="3">Dephosphorylates the 5' and 2'(3')-phosphates of deoxyribonucleotides.</text>
</comment>
<comment type="cofactor">
    <cofactor evidence="2">
        <name>Mg(2+)</name>
        <dbReference type="ChEBI" id="CHEBI:18420"/>
    </cofactor>
</comment>
<comment type="similarity">
    <text evidence="3">Belongs to the 5'(3')-deoxyribonucleotidase family.</text>
</comment>
<name>53DR_BORBR</name>
<evidence type="ECO:0000250" key="1">
    <source>
        <dbReference type="UniProtKB" id="Q8CTG7"/>
    </source>
</evidence>
<evidence type="ECO:0000250" key="2">
    <source>
        <dbReference type="UniProtKB" id="Q97JQ5"/>
    </source>
</evidence>
<evidence type="ECO:0000305" key="3"/>
<keyword id="KW-0378">Hydrolase</keyword>
<keyword id="KW-0460">Magnesium</keyword>
<keyword id="KW-0479">Metal-binding</keyword>
<dbReference type="EC" id="3.1.3.-"/>
<dbReference type="EMBL" id="BX640438">
    <property type="protein sequence ID" value="CAE30931.1"/>
    <property type="molecule type" value="Genomic_DNA"/>
</dbReference>
<dbReference type="RefSeq" id="WP_010925806.1">
    <property type="nucleotide sequence ID" value="NC_002927.3"/>
</dbReference>
<dbReference type="SMR" id="Q7WQA0"/>
<dbReference type="KEGG" id="bbr:BB0433"/>
<dbReference type="eggNOG" id="COG4502">
    <property type="taxonomic scope" value="Bacteria"/>
</dbReference>
<dbReference type="HOGENOM" id="CLU_100259_0_0_4"/>
<dbReference type="Proteomes" id="UP000001027">
    <property type="component" value="Chromosome"/>
</dbReference>
<dbReference type="GO" id="GO:0008253">
    <property type="term" value="F:5'-nucleotidase activity"/>
    <property type="evidence" value="ECO:0007669"/>
    <property type="project" value="InterPro"/>
</dbReference>
<dbReference type="GO" id="GO:0046872">
    <property type="term" value="F:metal ion binding"/>
    <property type="evidence" value="ECO:0007669"/>
    <property type="project" value="UniProtKB-KW"/>
</dbReference>
<dbReference type="GO" id="GO:0009223">
    <property type="term" value="P:pyrimidine deoxyribonucleotide catabolic process"/>
    <property type="evidence" value="ECO:0007669"/>
    <property type="project" value="TreeGrafter"/>
</dbReference>
<dbReference type="CDD" id="cd02587">
    <property type="entry name" value="HAD_5-3dNT"/>
    <property type="match status" value="1"/>
</dbReference>
<dbReference type="Gene3D" id="1.10.40.40">
    <property type="entry name" value="Deoxyribonucleotidase, domain 2"/>
    <property type="match status" value="1"/>
</dbReference>
<dbReference type="Gene3D" id="3.40.50.1000">
    <property type="entry name" value="HAD superfamily/HAD-like"/>
    <property type="match status" value="1"/>
</dbReference>
<dbReference type="InterPro" id="IPR010708">
    <property type="entry name" value="5'(3')-deoxyribonucleotidase"/>
</dbReference>
<dbReference type="InterPro" id="IPR036412">
    <property type="entry name" value="HAD-like_sf"/>
</dbReference>
<dbReference type="InterPro" id="IPR023214">
    <property type="entry name" value="HAD_sf"/>
</dbReference>
<dbReference type="PANTHER" id="PTHR16504">
    <property type="entry name" value="5'(3')-DEOXYRIBONUCLEOTIDASE"/>
    <property type="match status" value="1"/>
</dbReference>
<dbReference type="PANTHER" id="PTHR16504:SF4">
    <property type="entry name" value="5'(3')-DEOXYRIBONUCLEOTIDASE"/>
    <property type="match status" value="1"/>
</dbReference>
<dbReference type="Pfam" id="PF06941">
    <property type="entry name" value="NT5C"/>
    <property type="match status" value="1"/>
</dbReference>
<dbReference type="SFLD" id="SFLDG01145">
    <property type="entry name" value="C1.2.1"/>
    <property type="match status" value="1"/>
</dbReference>
<dbReference type="SFLD" id="SFLDS00003">
    <property type="entry name" value="Haloacid_Dehalogenase"/>
    <property type="match status" value="1"/>
</dbReference>
<dbReference type="SUPFAM" id="SSF56784">
    <property type="entry name" value="HAD-like"/>
    <property type="match status" value="1"/>
</dbReference>
<protein>
    <recommendedName>
        <fullName>Putative 5'(3')-deoxyribonucleotidase</fullName>
        <ecNumber>3.1.3.-</ecNumber>
    </recommendedName>
</protein>
<sequence>MLILLDQDGVLADFEHAFIDAWRKRHPDIEPVAFKDRKSFHIREDYAPELRGLAEAIYTAPGFIRDLPPVPGAIEAFRELLALGMDVRICSSPLMQFENCVAEKYLWVERHLGREATQRLILTRDKTLVQGDLLIDDRPVITGAARPRWRHIIYDAPYNRDQTDRPRLDWRNWRNVLAGELYRSDA</sequence>
<proteinExistence type="inferred from homology"/>
<gene>
    <name type="ordered locus">BB0433</name>
</gene>
<accession>Q7WQA0</accession>
<feature type="chain" id="PRO_0000164375" description="Putative 5'(3')-deoxyribonucleotidase">
    <location>
        <begin position="1"/>
        <end position="186"/>
    </location>
</feature>
<feature type="active site" description="Nucleophile" evidence="3">
    <location>
        <position position="6"/>
    </location>
</feature>
<feature type="active site" description="Proton donor" evidence="3">
    <location>
        <position position="8"/>
    </location>
</feature>
<feature type="binding site" evidence="1">
    <location>
        <position position="6"/>
    </location>
    <ligand>
        <name>Mg(2+)</name>
        <dbReference type="ChEBI" id="CHEBI:18420"/>
    </ligand>
</feature>
<feature type="binding site" evidence="1">
    <location>
        <position position="8"/>
    </location>
    <ligand>
        <name>Mg(2+)</name>
        <dbReference type="ChEBI" id="CHEBI:18420"/>
    </ligand>
</feature>
<feature type="binding site" evidence="1">
    <location>
        <position position="137"/>
    </location>
    <ligand>
        <name>Mg(2+)</name>
        <dbReference type="ChEBI" id="CHEBI:18420"/>
    </ligand>
</feature>
<reference key="1">
    <citation type="journal article" date="2003" name="Nat. Genet.">
        <title>Comparative analysis of the genome sequences of Bordetella pertussis, Bordetella parapertussis and Bordetella bronchiseptica.</title>
        <authorList>
            <person name="Parkhill J."/>
            <person name="Sebaihia M."/>
            <person name="Preston A."/>
            <person name="Murphy L.D."/>
            <person name="Thomson N.R."/>
            <person name="Harris D.E."/>
            <person name="Holden M.T.G."/>
            <person name="Churcher C.M."/>
            <person name="Bentley S.D."/>
            <person name="Mungall K.L."/>
            <person name="Cerdeno-Tarraga A.-M."/>
            <person name="Temple L."/>
            <person name="James K.D."/>
            <person name="Harris B."/>
            <person name="Quail M.A."/>
            <person name="Achtman M."/>
            <person name="Atkin R."/>
            <person name="Baker S."/>
            <person name="Basham D."/>
            <person name="Bason N."/>
            <person name="Cherevach I."/>
            <person name="Chillingworth T."/>
            <person name="Collins M."/>
            <person name="Cronin A."/>
            <person name="Davis P."/>
            <person name="Doggett J."/>
            <person name="Feltwell T."/>
            <person name="Goble A."/>
            <person name="Hamlin N."/>
            <person name="Hauser H."/>
            <person name="Holroyd S."/>
            <person name="Jagels K."/>
            <person name="Leather S."/>
            <person name="Moule S."/>
            <person name="Norberczak H."/>
            <person name="O'Neil S."/>
            <person name="Ormond D."/>
            <person name="Price C."/>
            <person name="Rabbinowitsch E."/>
            <person name="Rutter S."/>
            <person name="Sanders M."/>
            <person name="Saunders D."/>
            <person name="Seeger K."/>
            <person name="Sharp S."/>
            <person name="Simmonds M."/>
            <person name="Skelton J."/>
            <person name="Squares R."/>
            <person name="Squares S."/>
            <person name="Stevens K."/>
            <person name="Unwin L."/>
            <person name="Whitehead S."/>
            <person name="Barrell B.G."/>
            <person name="Maskell D.J."/>
        </authorList>
    </citation>
    <scope>NUCLEOTIDE SEQUENCE [LARGE SCALE GENOMIC DNA]</scope>
    <source>
        <strain>ATCC BAA-588 / NCTC 13252 / RB50</strain>
    </source>
</reference>